<proteinExistence type="inferred from homology"/>
<protein>
    <recommendedName>
        <fullName>Olfactory receptor 5B17</fullName>
    </recommendedName>
    <alternativeName>
        <fullName>Olfactory receptor 5B20</fullName>
    </alternativeName>
    <alternativeName>
        <fullName>Olfactory receptor OR11-237</fullName>
    </alternativeName>
</protein>
<reference key="1">
    <citation type="submission" date="2001-07" db="EMBL/GenBank/DDBJ databases">
        <title>Genome-wide discovery and analysis of human seven transmembrane helix receptor genes.</title>
        <authorList>
            <person name="Suwa M."/>
            <person name="Sato T."/>
            <person name="Okouchi I."/>
            <person name="Arita M."/>
            <person name="Futami K."/>
            <person name="Matsumoto S."/>
            <person name="Tsutsumi S."/>
            <person name="Aburatani H."/>
            <person name="Asai K."/>
            <person name="Akiyama Y."/>
        </authorList>
    </citation>
    <scope>NUCLEOTIDE SEQUENCE [GENOMIC DNA]</scope>
</reference>
<reference key="2">
    <citation type="journal article" date="2004" name="Proc. Natl. Acad. Sci. U.S.A.">
        <title>The human olfactory receptor gene family.</title>
        <authorList>
            <person name="Malnic B."/>
            <person name="Godfrey P.A."/>
            <person name="Buck L.B."/>
        </authorList>
    </citation>
    <scope>IDENTIFICATION</scope>
</reference>
<reference key="3">
    <citation type="journal article" date="2004" name="Proc. Natl. Acad. Sci. U.S.A.">
        <authorList>
            <person name="Malnic B."/>
            <person name="Godfrey P.A."/>
            <person name="Buck L.B."/>
        </authorList>
    </citation>
    <scope>ERRATUM OF PUBMED:14983052</scope>
</reference>
<dbReference type="EMBL" id="AB065849">
    <property type="protein sequence ID" value="BAC06067.1"/>
    <property type="molecule type" value="Genomic_DNA"/>
</dbReference>
<dbReference type="EMBL" id="BK004491">
    <property type="protein sequence ID" value="DAA04889.1"/>
    <property type="molecule type" value="Genomic_DNA"/>
</dbReference>
<dbReference type="CCDS" id="CCDS31548.1"/>
<dbReference type="RefSeq" id="NP_001005489.1">
    <property type="nucleotide sequence ID" value="NM_001005489.2"/>
</dbReference>
<dbReference type="SMR" id="Q8NGF7"/>
<dbReference type="FunCoup" id="Q8NGF7">
    <property type="interactions" value="416"/>
</dbReference>
<dbReference type="STRING" id="9606.ENSP00000349945"/>
<dbReference type="GlyCosmos" id="Q8NGF7">
    <property type="glycosylation" value="1 site, No reported glycans"/>
</dbReference>
<dbReference type="GlyGen" id="Q8NGF7">
    <property type="glycosylation" value="1 site"/>
</dbReference>
<dbReference type="PhosphoSitePlus" id="Q8NGF7"/>
<dbReference type="BioMuta" id="OR5B17"/>
<dbReference type="DMDM" id="38372681"/>
<dbReference type="jPOST" id="Q8NGF7"/>
<dbReference type="PaxDb" id="9606-ENSP00000349945"/>
<dbReference type="Antibodypedia" id="70678">
    <property type="antibodies" value="17 antibodies from 11 providers"/>
</dbReference>
<dbReference type="DNASU" id="219965"/>
<dbReference type="Ensembl" id="ENST00000357377.3">
    <property type="protein sequence ID" value="ENSP00000349945.3"/>
    <property type="gene ID" value="ENSG00000197786.3"/>
</dbReference>
<dbReference type="GeneID" id="219965"/>
<dbReference type="KEGG" id="hsa:219965"/>
<dbReference type="MANE-Select" id="ENST00000357377.3">
    <property type="protein sequence ID" value="ENSP00000349945.3"/>
    <property type="RefSeq nucleotide sequence ID" value="NM_001005489.2"/>
    <property type="RefSeq protein sequence ID" value="NP_001005489.1"/>
</dbReference>
<dbReference type="UCSC" id="uc010rke.3">
    <property type="organism name" value="human"/>
</dbReference>
<dbReference type="AGR" id="HGNC:15267"/>
<dbReference type="CTD" id="219965"/>
<dbReference type="DisGeNET" id="219965"/>
<dbReference type="GeneCards" id="OR5B17"/>
<dbReference type="HGNC" id="HGNC:15267">
    <property type="gene designation" value="OR5B17"/>
</dbReference>
<dbReference type="HPA" id="ENSG00000197786">
    <property type="expression patterns" value="Not detected"/>
</dbReference>
<dbReference type="neXtProt" id="NX_Q8NGF7"/>
<dbReference type="OpenTargets" id="ENSG00000197786"/>
<dbReference type="PharmGKB" id="PA32486"/>
<dbReference type="VEuPathDB" id="HostDB:ENSG00000197786"/>
<dbReference type="eggNOG" id="ENOG502QVH7">
    <property type="taxonomic scope" value="Eukaryota"/>
</dbReference>
<dbReference type="GeneTree" id="ENSGT01120000271832"/>
<dbReference type="HOGENOM" id="CLU_012526_1_0_1"/>
<dbReference type="InParanoid" id="Q8NGF7"/>
<dbReference type="OMA" id="TVIIMYV"/>
<dbReference type="OrthoDB" id="9442037at2759"/>
<dbReference type="PAN-GO" id="Q8NGF7">
    <property type="GO annotations" value="4 GO annotations based on evolutionary models"/>
</dbReference>
<dbReference type="PhylomeDB" id="Q8NGF7"/>
<dbReference type="TreeFam" id="TF352753"/>
<dbReference type="PathwayCommons" id="Q8NGF7"/>
<dbReference type="Reactome" id="R-HSA-9752946">
    <property type="pathway name" value="Expression and translocation of olfactory receptors"/>
</dbReference>
<dbReference type="BioGRID-ORCS" id="219965">
    <property type="hits" value="9 hits in 744 CRISPR screens"/>
</dbReference>
<dbReference type="GeneWiki" id="OR5B17"/>
<dbReference type="GenomeRNAi" id="219965"/>
<dbReference type="Pharos" id="Q8NGF7">
    <property type="development level" value="Tdark"/>
</dbReference>
<dbReference type="PRO" id="PR:Q8NGF7"/>
<dbReference type="Proteomes" id="UP000005640">
    <property type="component" value="Chromosome 11"/>
</dbReference>
<dbReference type="RNAct" id="Q8NGF7">
    <property type="molecule type" value="protein"/>
</dbReference>
<dbReference type="Bgee" id="ENSG00000197786">
    <property type="expression patterns" value="Expressed in male germ line stem cell (sensu Vertebrata) in testis"/>
</dbReference>
<dbReference type="ExpressionAtlas" id="Q8NGF7">
    <property type="expression patterns" value="differential"/>
</dbReference>
<dbReference type="GO" id="GO:0005886">
    <property type="term" value="C:plasma membrane"/>
    <property type="evidence" value="ECO:0007669"/>
    <property type="project" value="UniProtKB-SubCell"/>
</dbReference>
<dbReference type="GO" id="GO:0004930">
    <property type="term" value="F:G protein-coupled receptor activity"/>
    <property type="evidence" value="ECO:0007669"/>
    <property type="project" value="UniProtKB-KW"/>
</dbReference>
<dbReference type="GO" id="GO:0005549">
    <property type="term" value="F:odorant binding"/>
    <property type="evidence" value="ECO:0000318"/>
    <property type="project" value="GO_Central"/>
</dbReference>
<dbReference type="GO" id="GO:0004984">
    <property type="term" value="F:olfactory receptor activity"/>
    <property type="evidence" value="ECO:0000318"/>
    <property type="project" value="GO_Central"/>
</dbReference>
<dbReference type="GO" id="GO:0007186">
    <property type="term" value="P:G protein-coupled receptor signaling pathway"/>
    <property type="evidence" value="ECO:0000318"/>
    <property type="project" value="GO_Central"/>
</dbReference>
<dbReference type="GO" id="GO:0007608">
    <property type="term" value="P:sensory perception of smell"/>
    <property type="evidence" value="ECO:0000318"/>
    <property type="project" value="GO_Central"/>
</dbReference>
<dbReference type="CDD" id="cd15407">
    <property type="entry name" value="7tmA_OR5B-like"/>
    <property type="match status" value="1"/>
</dbReference>
<dbReference type="FunFam" id="1.10.1220.70:FF:000001">
    <property type="entry name" value="Olfactory receptor"/>
    <property type="match status" value="1"/>
</dbReference>
<dbReference type="FunFam" id="1.20.1070.10:FF:000003">
    <property type="entry name" value="Olfactory receptor"/>
    <property type="match status" value="1"/>
</dbReference>
<dbReference type="Gene3D" id="1.20.1070.10">
    <property type="entry name" value="Rhodopsin 7-helix transmembrane proteins"/>
    <property type="match status" value="1"/>
</dbReference>
<dbReference type="InterPro" id="IPR000276">
    <property type="entry name" value="GPCR_Rhodpsn"/>
</dbReference>
<dbReference type="InterPro" id="IPR017452">
    <property type="entry name" value="GPCR_Rhodpsn_7TM"/>
</dbReference>
<dbReference type="InterPro" id="IPR000725">
    <property type="entry name" value="Olfact_rcpt"/>
</dbReference>
<dbReference type="PANTHER" id="PTHR48018">
    <property type="entry name" value="OLFACTORY RECEPTOR"/>
    <property type="match status" value="1"/>
</dbReference>
<dbReference type="Pfam" id="PF13853">
    <property type="entry name" value="7tm_4"/>
    <property type="match status" value="1"/>
</dbReference>
<dbReference type="PRINTS" id="PR00237">
    <property type="entry name" value="GPCRRHODOPSN"/>
</dbReference>
<dbReference type="PRINTS" id="PR00245">
    <property type="entry name" value="OLFACTORYR"/>
</dbReference>
<dbReference type="SUPFAM" id="SSF81321">
    <property type="entry name" value="Family A G protein-coupled receptor-like"/>
    <property type="match status" value="1"/>
</dbReference>
<dbReference type="PROSITE" id="PS00237">
    <property type="entry name" value="G_PROTEIN_RECEP_F1_1"/>
    <property type="match status" value="1"/>
</dbReference>
<dbReference type="PROSITE" id="PS50262">
    <property type="entry name" value="G_PROTEIN_RECEP_F1_2"/>
    <property type="match status" value="1"/>
</dbReference>
<name>OR5BH_HUMAN</name>
<accession>Q8NGF7</accession>
<accession>Q6IEX1</accession>
<gene>
    <name type="primary">OR5B17</name>
    <name type="synonym">OR5B20P</name>
</gene>
<comment type="function">
    <text evidence="3">Odorant receptor.</text>
</comment>
<comment type="subcellular location">
    <subcellularLocation>
        <location>Cell membrane</location>
        <topology>Multi-pass membrane protein</topology>
    </subcellularLocation>
</comment>
<comment type="similarity">
    <text evidence="2">Belongs to the G-protein coupled receptor 1 family.</text>
</comment>
<comment type="online information" name="Human Olfactory Receptor Data Exploratorium (HORDE)">
    <link uri="http://genome.weizmann.ac.il/horde/card/index/symbol:OR5B17"/>
</comment>
<feature type="chain" id="PRO_0000150588" description="Olfactory receptor 5B17">
    <location>
        <begin position="1"/>
        <end position="314"/>
    </location>
</feature>
<feature type="topological domain" description="Extracellular" evidence="1">
    <location>
        <begin position="1"/>
        <end position="23"/>
    </location>
</feature>
<feature type="transmembrane region" description="Helical; Name=1" evidence="1">
    <location>
        <begin position="24"/>
        <end position="44"/>
    </location>
</feature>
<feature type="topological domain" description="Cytoplasmic" evidence="1">
    <location>
        <begin position="45"/>
        <end position="52"/>
    </location>
</feature>
<feature type="transmembrane region" description="Helical; Name=2" evidence="1">
    <location>
        <begin position="53"/>
        <end position="73"/>
    </location>
</feature>
<feature type="topological domain" description="Extracellular" evidence="1">
    <location>
        <begin position="74"/>
        <end position="97"/>
    </location>
</feature>
<feature type="transmembrane region" description="Helical; Name=3" evidence="1">
    <location>
        <begin position="98"/>
        <end position="118"/>
    </location>
</feature>
<feature type="topological domain" description="Cytoplasmic" evidence="1">
    <location>
        <begin position="119"/>
        <end position="137"/>
    </location>
</feature>
<feature type="transmembrane region" description="Helical; Name=4" evidence="1">
    <location>
        <begin position="138"/>
        <end position="158"/>
    </location>
</feature>
<feature type="topological domain" description="Extracellular" evidence="1">
    <location>
        <begin position="159"/>
        <end position="194"/>
    </location>
</feature>
<feature type="transmembrane region" description="Helical; Name=5" evidence="1">
    <location>
        <begin position="195"/>
        <end position="215"/>
    </location>
</feature>
<feature type="topological domain" description="Cytoplasmic" evidence="1">
    <location>
        <begin position="216"/>
        <end position="235"/>
    </location>
</feature>
<feature type="transmembrane region" description="Helical; Name=6" evidence="1">
    <location>
        <begin position="236"/>
        <end position="256"/>
    </location>
</feature>
<feature type="topological domain" description="Extracellular" evidence="1">
    <location>
        <begin position="257"/>
        <end position="269"/>
    </location>
</feature>
<feature type="transmembrane region" description="Helical; Name=7" evidence="1">
    <location>
        <begin position="270"/>
        <end position="290"/>
    </location>
</feature>
<feature type="topological domain" description="Cytoplasmic" evidence="1">
    <location>
        <begin position="291"/>
        <end position="314"/>
    </location>
</feature>
<feature type="glycosylation site" description="N-linked (GlcNAc...) asparagine" evidence="1">
    <location>
        <position position="3"/>
    </location>
</feature>
<feature type="disulfide bond" evidence="2">
    <location>
        <begin position="95"/>
        <end position="187"/>
    </location>
</feature>
<feature type="sequence variant" id="VAR_034219" description="In dbSNP:rs4939208.">
    <original>L</original>
    <variation>I</variation>
    <location>
        <position position="80"/>
    </location>
</feature>
<feature type="sequence variant" id="VAR_053193" description="In dbSNP:rs4127353.">
    <original>Y</original>
    <variation>C</variation>
    <location>
        <position position="308"/>
    </location>
</feature>
<evidence type="ECO:0000255" key="1"/>
<evidence type="ECO:0000255" key="2">
    <source>
        <dbReference type="PROSITE-ProRule" id="PRU00521"/>
    </source>
</evidence>
<evidence type="ECO:0000305" key="3"/>
<organism>
    <name type="scientific">Homo sapiens</name>
    <name type="common">Human</name>
    <dbReference type="NCBI Taxonomy" id="9606"/>
    <lineage>
        <taxon>Eukaryota</taxon>
        <taxon>Metazoa</taxon>
        <taxon>Chordata</taxon>
        <taxon>Craniata</taxon>
        <taxon>Vertebrata</taxon>
        <taxon>Euteleostomi</taxon>
        <taxon>Mammalia</taxon>
        <taxon>Eutheria</taxon>
        <taxon>Euarchontoglires</taxon>
        <taxon>Primates</taxon>
        <taxon>Haplorrhini</taxon>
        <taxon>Catarrhini</taxon>
        <taxon>Hominidae</taxon>
        <taxon>Homo</taxon>
    </lineage>
</organism>
<keyword id="KW-1003">Cell membrane</keyword>
<keyword id="KW-1015">Disulfide bond</keyword>
<keyword id="KW-0297">G-protein coupled receptor</keyword>
<keyword id="KW-0325">Glycoprotein</keyword>
<keyword id="KW-0472">Membrane</keyword>
<keyword id="KW-0552">Olfaction</keyword>
<keyword id="KW-0675">Receptor</keyword>
<keyword id="KW-1185">Reference proteome</keyword>
<keyword id="KW-0716">Sensory transduction</keyword>
<keyword id="KW-0807">Transducer</keyword>
<keyword id="KW-0812">Transmembrane</keyword>
<keyword id="KW-1133">Transmembrane helix</keyword>
<sequence length="314" mass="35091">MENNTEVSEFILLGLTNAPELQVPLFIMFTLIYLITLTGNLGMIILILLDSHLHTPMYFFLSNLSLAGIGYSSAVTPKVLTGLLIEDKAISYSACAAQMFFCAVFATVENYLLSSMAYDRYAAVCNPLHYTTTMTTRVCACLAIGCYVIGFLNASIQIGDTFRLSFCMSNVIHHFFCDKPAVITLTCSEKHISELILVLISSFNVFFALLVTLISYLFILITILKRHTGKGYQKPLSTCGSHLIAIFLFYITVIIMYIRPSSSHSMDTDKIASVFYTMIIPMLSPIVYTLRNKDVKNAFMKVVEKAKYSLDSVF</sequence>